<reference key="1">
    <citation type="journal article" date="2001" name="Genome Res.">
        <title>Sequence and analysis of chromosome I of the amitochondriate intracellular parasite Encephalitozoon cuniculi (Microspora).</title>
        <authorList>
            <person name="Peyret P."/>
            <person name="Katinka M.D."/>
            <person name="Duprat S."/>
            <person name="Duffieux F."/>
            <person name="Barbe V."/>
            <person name="Barbazanges M."/>
            <person name="Weissenbach J."/>
            <person name="Saurin W."/>
            <person name="Vivares C.P."/>
        </authorList>
    </citation>
    <scope>NUCLEOTIDE SEQUENCE [LARGE SCALE GENOMIC DNA]</scope>
    <source>
        <strain>GB-M1</strain>
    </source>
</reference>
<reference key="2">
    <citation type="journal article" date="2001" name="Nature">
        <title>Genome sequence and gene compaction of the eukaryote parasite Encephalitozoon cuniculi.</title>
        <authorList>
            <person name="Katinka M.D."/>
            <person name="Duprat S."/>
            <person name="Cornillot E."/>
            <person name="Metenier G."/>
            <person name="Thomarat F."/>
            <person name="Prensier G."/>
            <person name="Barbe V."/>
            <person name="Peyretaillade E."/>
            <person name="Brottier P."/>
            <person name="Wincker P."/>
            <person name="Delbac F."/>
            <person name="El Alaoui H."/>
            <person name="Peyret P."/>
            <person name="Saurin W."/>
            <person name="Gouy M."/>
            <person name="Weissenbach J."/>
            <person name="Vivares C.P."/>
        </authorList>
    </citation>
    <scope>NUCLEOTIDE SEQUENCE [LARGE SCALE GENOMIC DNA]</scope>
    <source>
        <strain>GB-M1</strain>
    </source>
</reference>
<dbReference type="EMBL" id="AL391737">
    <property type="protein sequence ID" value="CAD24919.1"/>
    <property type="molecule type" value="Genomic_DNA"/>
</dbReference>
<dbReference type="RefSeq" id="XP_965884.1">
    <property type="nucleotide sequence ID" value="XM_960791.1"/>
</dbReference>
<dbReference type="SMR" id="Q8SWN5"/>
<dbReference type="FunCoup" id="Q8SWN5">
    <property type="interactions" value="257"/>
</dbReference>
<dbReference type="STRING" id="284813.Q8SWN5"/>
<dbReference type="VEuPathDB" id="MicrosporidiaDB:ECU01_0500"/>
<dbReference type="HOGENOM" id="CLU_077754_5_0_1"/>
<dbReference type="InParanoid" id="Q8SWN5"/>
<dbReference type="OMA" id="MENTCFR"/>
<dbReference type="OrthoDB" id="344220at2759"/>
<dbReference type="Proteomes" id="UP000000819">
    <property type="component" value="Chromosome I"/>
</dbReference>
<dbReference type="GO" id="GO:0016592">
    <property type="term" value="C:mediator complex"/>
    <property type="evidence" value="ECO:0007669"/>
    <property type="project" value="InterPro"/>
</dbReference>
<dbReference type="GO" id="GO:0003712">
    <property type="term" value="F:transcription coregulator activity"/>
    <property type="evidence" value="ECO:0007669"/>
    <property type="project" value="InterPro"/>
</dbReference>
<dbReference type="GO" id="GO:0006357">
    <property type="term" value="P:regulation of transcription by RNA polymerase II"/>
    <property type="evidence" value="ECO:0007669"/>
    <property type="project" value="InterPro"/>
</dbReference>
<dbReference type="Gene3D" id="3.10.450.580">
    <property type="entry name" value="Mediator complex, subunit Med6"/>
    <property type="match status" value="1"/>
</dbReference>
<dbReference type="InterPro" id="IPR007018">
    <property type="entry name" value="Mediator_Med6"/>
</dbReference>
<dbReference type="InterPro" id="IPR038566">
    <property type="entry name" value="Mediator_Med6_sf"/>
</dbReference>
<dbReference type="PANTHER" id="PTHR13104">
    <property type="entry name" value="MED-6-RELATED"/>
    <property type="match status" value="1"/>
</dbReference>
<dbReference type="Pfam" id="PF04934">
    <property type="entry name" value="Med6"/>
    <property type="match status" value="1"/>
</dbReference>
<keyword id="KW-0010">Activator</keyword>
<keyword id="KW-0539">Nucleus</keyword>
<keyword id="KW-1185">Reference proteome</keyword>
<keyword id="KW-0804">Transcription</keyword>
<keyword id="KW-0805">Transcription regulation</keyword>
<name>MED6_ENCCU</name>
<evidence type="ECO:0000250" key="1"/>
<evidence type="ECO:0000305" key="2"/>
<proteinExistence type="inferred from homology"/>
<gene>
    <name type="primary">MED6</name>
    <name type="ordered locus">ECU01_0500</name>
</gene>
<accession>Q8SWN5</accession>
<comment type="function">
    <text evidence="1">Component of the Mediator complex, a coactivator involved in the regulated transcription of nearly all RNA polymerase II-dependent genes. Mediator functions as a bridge to convey information from gene-specific regulatory proteins to the basal RNA polymerase II transcription machinery. Mediator is recruited to promoters by direct interactions with regulatory proteins and serves as a scaffold for the assembly of a functional preinitiation complex with RNA polymerase II and the general transcription factors (By similarity).</text>
</comment>
<comment type="subunit">
    <text evidence="1">Component of the Mediator complex.</text>
</comment>
<comment type="subcellular location">
    <subcellularLocation>
        <location evidence="1">Nucleus</location>
    </subcellularLocation>
</comment>
<comment type="similarity">
    <text evidence="2">Belongs to the Mediator complex subunit 6 family.</text>
</comment>
<organism>
    <name type="scientific">Encephalitozoon cuniculi (strain GB-M1)</name>
    <name type="common">Microsporidian parasite</name>
    <dbReference type="NCBI Taxonomy" id="284813"/>
    <lineage>
        <taxon>Eukaryota</taxon>
        <taxon>Fungi</taxon>
        <taxon>Fungi incertae sedis</taxon>
        <taxon>Microsporidia</taxon>
        <taxon>Unikaryonidae</taxon>
        <taxon>Encephalitozoon</taxon>
    </lineage>
</organism>
<protein>
    <recommendedName>
        <fullName>Mediator of RNA polymerase II transcription subunit 6</fullName>
    </recommendedName>
    <alternativeName>
        <fullName>Mediator complex subunit 6</fullName>
    </alternativeName>
</protein>
<sequence length="177" mass="20879">MEEREESISFVDQRFLGSKPLDDTNVLEYFSGSPFYDKSCNNEILKMQTQFRGLDQKSKLFSMVGIFYEVESSNHEKTLFVIRKAYNHGDTAETLGMYYIIHGHVYAAPTNYSIYRCRMGDSMWQLNSFIDRMMEKRRFNPFSPPKGRRLAKSLEDSKDLDFMMEIFNDFKKEQAES</sequence>
<feature type="chain" id="PRO_0000303059" description="Mediator of RNA polymerase II transcription subunit 6">
    <location>
        <begin position="1"/>
        <end position="177"/>
    </location>
</feature>